<sequence length="283" mass="32313">MAHLGAHFAFRSRWQKTDDELCRHSMSFILHKAIRNDFFQSYLYLLEKIPLVKLYALTSQVIDGEMQFYARAKLFYQEVPATEEGMMGNFIELSNPDIQASREFLRKFVGGPGRAGTGCALDCGSGIGRVSKHVLLPVFSSVELVDMMESFLLEAQSYLQVNEDKVESYHCYSLQEFTPHLGRYDVIWIQWVSGYLTDKDLLAFLSRCRDGLKENGVIILKDNVAREGCIFDLSDSSVTRDMDILRSLIRKSGLVVLGQEKQEGFPEQCVPVWMFALHSDRHS</sequence>
<dbReference type="EC" id="2.1.1.299" evidence="1"/>
<dbReference type="EMBL" id="CH466520">
    <property type="protein sequence ID" value="EDL39274.1"/>
    <property type="molecule type" value="Genomic_DNA"/>
</dbReference>
<dbReference type="EMBL" id="BC157906">
    <property type="protein sequence ID" value="AAI57907.1"/>
    <property type="molecule type" value="mRNA"/>
</dbReference>
<dbReference type="EMBL" id="BC158115">
    <property type="protein sequence ID" value="AAI58116.1"/>
    <property type="molecule type" value="mRNA"/>
</dbReference>
<dbReference type="EMBL" id="BC172048">
    <property type="protein sequence ID" value="AAI72048.1"/>
    <property type="molecule type" value="mRNA"/>
</dbReference>
<dbReference type="CCDS" id="CCDS48420.1"/>
<dbReference type="RefSeq" id="NP_001137428.1">
    <property type="nucleotide sequence ID" value="NM_001143956.1"/>
</dbReference>
<dbReference type="SMR" id="B2RXM4"/>
<dbReference type="FunCoup" id="B2RXM4">
    <property type="interactions" value="1003"/>
</dbReference>
<dbReference type="STRING" id="10090.ENSMUSP00000124211"/>
<dbReference type="PhosphoSitePlus" id="B2RXM4"/>
<dbReference type="PaxDb" id="10090-ENSMUSP00000124211"/>
<dbReference type="ProteomicsDB" id="293755"/>
<dbReference type="Antibodypedia" id="34370">
    <property type="antibodies" value="67 antibodies from 15 providers"/>
</dbReference>
<dbReference type="Ensembl" id="ENSMUST00000159679.8">
    <property type="protein sequence ID" value="ENSMUSP00000124211.2"/>
    <property type="gene ID" value="ENSMUSG00000040113.15"/>
</dbReference>
<dbReference type="GeneID" id="240879"/>
<dbReference type="KEGG" id="mmu:240879"/>
<dbReference type="UCSC" id="uc011wus.1">
    <property type="organism name" value="mouse"/>
</dbReference>
<dbReference type="AGR" id="MGI:2685053"/>
<dbReference type="CTD" id="149281"/>
<dbReference type="MGI" id="MGI:2685053">
    <property type="gene designation" value="Ntmt2"/>
</dbReference>
<dbReference type="VEuPathDB" id="HostDB:ENSMUSG00000040113"/>
<dbReference type="eggNOG" id="KOG3178">
    <property type="taxonomic scope" value="Eukaryota"/>
</dbReference>
<dbReference type="GeneTree" id="ENSGT00390000008371"/>
<dbReference type="HOGENOM" id="CLU_055356_3_0_1"/>
<dbReference type="InParanoid" id="B2RXM4"/>
<dbReference type="OMA" id="ETYYCFN"/>
<dbReference type="OrthoDB" id="1298661at2759"/>
<dbReference type="PhylomeDB" id="B2RXM4"/>
<dbReference type="TreeFam" id="TF314174"/>
<dbReference type="BioGRID-ORCS" id="240879">
    <property type="hits" value="1 hit in 80 CRISPR screens"/>
</dbReference>
<dbReference type="PRO" id="PR:B2RXM4"/>
<dbReference type="Proteomes" id="UP000000589">
    <property type="component" value="Chromosome 1"/>
</dbReference>
<dbReference type="RNAct" id="B2RXM4">
    <property type="molecule type" value="protein"/>
</dbReference>
<dbReference type="Bgee" id="ENSMUSG00000040113">
    <property type="expression patterns" value="Expressed in extra-ocular muscle and 40 other cell types or tissues"/>
</dbReference>
<dbReference type="ExpressionAtlas" id="B2RXM4">
    <property type="expression patterns" value="baseline and differential"/>
</dbReference>
<dbReference type="GO" id="GO:0005634">
    <property type="term" value="C:nucleus"/>
    <property type="evidence" value="ECO:0000250"/>
    <property type="project" value="UniProtKB"/>
</dbReference>
<dbReference type="GO" id="GO:0071885">
    <property type="term" value="F:N-terminal protein N-methyltransferase activity"/>
    <property type="evidence" value="ECO:0000250"/>
    <property type="project" value="UniProtKB"/>
</dbReference>
<dbReference type="GO" id="GO:0006480">
    <property type="term" value="P:N-terminal protein amino acid methylation"/>
    <property type="evidence" value="ECO:0000250"/>
    <property type="project" value="UniProtKB"/>
</dbReference>
<dbReference type="CDD" id="cd02440">
    <property type="entry name" value="AdoMet_MTases"/>
    <property type="match status" value="1"/>
</dbReference>
<dbReference type="FunFam" id="3.40.50.150:FF:000025">
    <property type="entry name" value="N-terminal Xaa-Pro-Lys N-methyltransferase 1"/>
    <property type="match status" value="1"/>
</dbReference>
<dbReference type="Gene3D" id="3.40.50.150">
    <property type="entry name" value="Vaccinia Virus protein VP39"/>
    <property type="match status" value="1"/>
</dbReference>
<dbReference type="InterPro" id="IPR008576">
    <property type="entry name" value="MeTrfase_NTM1"/>
</dbReference>
<dbReference type="InterPro" id="IPR029063">
    <property type="entry name" value="SAM-dependent_MTases_sf"/>
</dbReference>
<dbReference type="PANTHER" id="PTHR12753">
    <property type="entry name" value="AD-003 - RELATED"/>
    <property type="match status" value="1"/>
</dbReference>
<dbReference type="PANTHER" id="PTHR12753:SF2">
    <property type="entry name" value="N-TERMINAL XAA-PRO-LYS N-METHYLTRANSFERASE 2"/>
    <property type="match status" value="1"/>
</dbReference>
<dbReference type="Pfam" id="PF05891">
    <property type="entry name" value="Methyltransf_PK"/>
    <property type="match status" value="1"/>
</dbReference>
<dbReference type="SUPFAM" id="SSF53335">
    <property type="entry name" value="S-adenosyl-L-methionine-dependent methyltransferases"/>
    <property type="match status" value="1"/>
</dbReference>
<feature type="chain" id="PRO_0000399779" description="N-terminal Xaa-Pro-Lys N-methyltransferase 2">
    <location>
        <begin position="1"/>
        <end position="283"/>
    </location>
</feature>
<feature type="binding site" evidence="1">
    <location>
        <position position="124"/>
    </location>
    <ligand>
        <name>S-adenosyl-L-methionine</name>
        <dbReference type="ChEBI" id="CHEBI:59789"/>
    </ligand>
</feature>
<feature type="binding site" evidence="1">
    <location>
        <position position="129"/>
    </location>
    <ligand>
        <name>S-adenosyl-L-methionine</name>
        <dbReference type="ChEBI" id="CHEBI:59789"/>
    </ligand>
</feature>
<feature type="binding site" evidence="1">
    <location>
        <position position="146"/>
    </location>
    <ligand>
        <name>S-adenosyl-L-methionine</name>
        <dbReference type="ChEBI" id="CHEBI:59789"/>
    </ligand>
</feature>
<feature type="binding site" evidence="1">
    <location>
        <begin position="174"/>
        <end position="175"/>
    </location>
    <ligand>
        <name>S-adenosyl-L-methionine</name>
        <dbReference type="ChEBI" id="CHEBI:59789"/>
    </ligand>
</feature>
<feature type="binding site" evidence="1">
    <location>
        <position position="190"/>
    </location>
    <ligand>
        <name>S-adenosyl-L-methionine</name>
        <dbReference type="ChEBI" id="CHEBI:59789"/>
    </ligand>
</feature>
<protein>
    <recommendedName>
        <fullName>N-terminal Xaa-Pro-Lys N-methyltransferase 2</fullName>
        <ecNumber evidence="1">2.1.1.299</ecNumber>
    </recommendedName>
    <alternativeName>
        <fullName>Alpha N-terminal protein methyltransferase 1B</fullName>
    </alternativeName>
    <alternativeName>
        <fullName>Methyltransferase-like protein 11B</fullName>
    </alternativeName>
    <alternativeName>
        <fullName>X-Pro-Lys N-terminal protein methyltransferase 1B</fullName>
        <shortName>NTM1B</shortName>
    </alternativeName>
</protein>
<comment type="function">
    <text evidence="1">Alpha N-methyltransferase that methylates the N-terminus of target proteins containing the N-terminal motif [Ala/Pro/Ser]-Pro-Lys when the initiator Met is cleaved. Specifically catalyzes monomethylation of exposed alpha-amino group of Ala or Ser residue in the [Ala/Ser]-Pro-Lys motif and Pro in the Pro-Pro-Lys motif. Predominantly functions as a mono-methyltransferase but is also able to di-/tri-methylate the GPKRIA peptide and di-methylate the PPKRIA peptide (in vitro). May activate NTMT1 by priming its substrates for trimethylation.</text>
</comment>
<comment type="catalytic activity">
    <reaction evidence="1">
        <text>N-terminal L-alanyl-L-prolyl-L-lysyl-[protein] + S-adenosyl-L-methionine = N-terminal N-methyl-L-alanyl-L-prolyl-L-lysyl-[protein] + S-adenosyl-L-homocysteine + H(+)</text>
        <dbReference type="Rhea" id="RHEA:54096"/>
        <dbReference type="Rhea" id="RHEA-COMP:13785"/>
        <dbReference type="Rhea" id="RHEA-COMP:13786"/>
        <dbReference type="ChEBI" id="CHEBI:15378"/>
        <dbReference type="ChEBI" id="CHEBI:57856"/>
        <dbReference type="ChEBI" id="CHEBI:59789"/>
        <dbReference type="ChEBI" id="CHEBI:138057"/>
        <dbReference type="ChEBI" id="CHEBI:138058"/>
        <dbReference type="EC" id="2.1.1.299"/>
    </reaction>
    <physiologicalReaction direction="left-to-right" evidence="1">
        <dbReference type="Rhea" id="RHEA:54097"/>
    </physiologicalReaction>
</comment>
<comment type="catalytic activity">
    <reaction evidence="1">
        <text>N-terminal L-prolyl-L-prolyl-L-lysyl-[protein] + S-adenosyl-L-methionine = N-terminal N-methyl-L-prolyl-L-prolyl-L-lysyl-[protein] + S-adenosyl-L-homocysteine + H(+)</text>
        <dbReference type="Rhea" id="RHEA:54100"/>
        <dbReference type="Rhea" id="RHEA-COMP:13787"/>
        <dbReference type="Rhea" id="RHEA-COMP:13788"/>
        <dbReference type="ChEBI" id="CHEBI:15378"/>
        <dbReference type="ChEBI" id="CHEBI:57856"/>
        <dbReference type="ChEBI" id="CHEBI:59789"/>
        <dbReference type="ChEBI" id="CHEBI:138059"/>
        <dbReference type="ChEBI" id="CHEBI:138060"/>
        <dbReference type="EC" id="2.1.1.299"/>
    </reaction>
    <physiologicalReaction direction="left-to-right" evidence="1">
        <dbReference type="Rhea" id="RHEA:54101"/>
    </physiologicalReaction>
</comment>
<comment type="catalytic activity">
    <reaction evidence="1">
        <text>N-terminal L-seryl-L-prolyl-L-lysyl-[protein] + S-adenosyl-L-methionine = N-terminal N-methyl-L-seryl-L-prolyl-L-lysyl-[protein] + S-adenosyl-L-homocysteine + H(+)</text>
        <dbReference type="Rhea" id="RHEA:54104"/>
        <dbReference type="Rhea" id="RHEA-COMP:13789"/>
        <dbReference type="Rhea" id="RHEA-COMP:13790"/>
        <dbReference type="ChEBI" id="CHEBI:15378"/>
        <dbReference type="ChEBI" id="CHEBI:57856"/>
        <dbReference type="ChEBI" id="CHEBI:59789"/>
        <dbReference type="ChEBI" id="CHEBI:138061"/>
        <dbReference type="ChEBI" id="CHEBI:138062"/>
        <dbReference type="EC" id="2.1.1.299"/>
    </reaction>
    <physiologicalReaction direction="left-to-right" evidence="1">
        <dbReference type="Rhea" id="RHEA:54105"/>
    </physiologicalReaction>
</comment>
<comment type="subcellular location">
    <subcellularLocation>
        <location evidence="1">Nucleus</location>
    </subcellularLocation>
</comment>
<comment type="similarity">
    <text evidence="2">Belongs to the methyltransferase superfamily. NTM1 family.</text>
</comment>
<name>NTM1B_MOUSE</name>
<gene>
    <name type="primary">Ntmt2</name>
    <name evidence="3" type="synonym">Mettl11b</name>
</gene>
<keyword id="KW-0489">Methyltransferase</keyword>
<keyword id="KW-0539">Nucleus</keyword>
<keyword id="KW-1185">Reference proteome</keyword>
<keyword id="KW-0949">S-adenosyl-L-methionine</keyword>
<keyword id="KW-0808">Transferase</keyword>
<evidence type="ECO:0000250" key="1">
    <source>
        <dbReference type="UniProtKB" id="Q5VVY1"/>
    </source>
</evidence>
<evidence type="ECO:0000305" key="2"/>
<evidence type="ECO:0000312" key="3">
    <source>
        <dbReference type="MGI" id="MGI:2685053"/>
    </source>
</evidence>
<proteinExistence type="evidence at transcript level"/>
<organism>
    <name type="scientific">Mus musculus</name>
    <name type="common">Mouse</name>
    <dbReference type="NCBI Taxonomy" id="10090"/>
    <lineage>
        <taxon>Eukaryota</taxon>
        <taxon>Metazoa</taxon>
        <taxon>Chordata</taxon>
        <taxon>Craniata</taxon>
        <taxon>Vertebrata</taxon>
        <taxon>Euteleostomi</taxon>
        <taxon>Mammalia</taxon>
        <taxon>Eutheria</taxon>
        <taxon>Euarchontoglires</taxon>
        <taxon>Glires</taxon>
        <taxon>Rodentia</taxon>
        <taxon>Myomorpha</taxon>
        <taxon>Muroidea</taxon>
        <taxon>Muridae</taxon>
        <taxon>Murinae</taxon>
        <taxon>Mus</taxon>
        <taxon>Mus</taxon>
    </lineage>
</organism>
<reference key="1">
    <citation type="submission" date="2005-09" db="EMBL/GenBank/DDBJ databases">
        <authorList>
            <person name="Mural R.J."/>
            <person name="Adams M.D."/>
            <person name="Myers E.W."/>
            <person name="Smith H.O."/>
            <person name="Venter J.C."/>
        </authorList>
    </citation>
    <scope>NUCLEOTIDE SEQUENCE [LARGE SCALE GENOMIC DNA]</scope>
</reference>
<reference key="2">
    <citation type="journal article" date="2004" name="Genome Res.">
        <title>The status, quality, and expansion of the NIH full-length cDNA project: the Mammalian Gene Collection (MGC).</title>
        <authorList>
            <consortium name="The MGC Project Team"/>
        </authorList>
    </citation>
    <scope>NUCLEOTIDE SEQUENCE [LARGE SCALE MRNA]</scope>
    <source>
        <tissue>Brain</tissue>
    </source>
</reference>
<accession>B2RXM4</accession>